<feature type="chain" id="PRO_0000249002" description="UBX domain-containing protein 1">
    <location>
        <begin position="1"/>
        <end position="287"/>
    </location>
</feature>
<feature type="domain" description="UBA" evidence="3">
    <location>
        <begin position="1"/>
        <end position="42"/>
    </location>
</feature>
<feature type="domain" description="UBX" evidence="4">
    <location>
        <begin position="205"/>
        <end position="284"/>
    </location>
</feature>
<feature type="region of interest" description="Disordered" evidence="5">
    <location>
        <begin position="44"/>
        <end position="207"/>
    </location>
</feature>
<feature type="coiled-coil region" evidence="2">
    <location>
        <begin position="72"/>
        <end position="164"/>
    </location>
</feature>
<feature type="compositionally biased region" description="Basic and acidic residues" evidence="5">
    <location>
        <begin position="72"/>
        <end position="114"/>
    </location>
</feature>
<feature type="compositionally biased region" description="Basic and acidic residues" evidence="5">
    <location>
        <begin position="129"/>
        <end position="169"/>
    </location>
</feature>
<feature type="compositionally biased region" description="Low complexity" evidence="5">
    <location>
        <begin position="176"/>
        <end position="197"/>
    </location>
</feature>
<reference key="1">
    <citation type="submission" date="2004-06" db="EMBL/GenBank/DDBJ databases">
        <authorList>
            <consortium name="NIH - Xenopus Gene Collection (XGC) project"/>
        </authorList>
    </citation>
    <scope>NUCLEOTIDE SEQUENCE [LARGE SCALE MRNA]</scope>
    <source>
        <tissue>Embryo</tissue>
    </source>
</reference>
<protein>
    <recommendedName>
        <fullName>UBX domain-containing protein 1</fullName>
    </recommendedName>
    <alternativeName>
        <fullName>SAPK substrate protein 1</fullName>
    </alternativeName>
</protein>
<gene>
    <name type="primary">ubxn1</name>
    <name type="synonym">saks1</name>
</gene>
<evidence type="ECO:0000250" key="1"/>
<evidence type="ECO:0000255" key="2"/>
<evidence type="ECO:0000255" key="3">
    <source>
        <dbReference type="PROSITE-ProRule" id="PRU00212"/>
    </source>
</evidence>
<evidence type="ECO:0000255" key="4">
    <source>
        <dbReference type="PROSITE-ProRule" id="PRU00215"/>
    </source>
</evidence>
<evidence type="ECO:0000256" key="5">
    <source>
        <dbReference type="SAM" id="MobiDB-lite"/>
    </source>
</evidence>
<comment type="function">
    <text evidence="1">Component of a complex required to couple deglycosylation and proteasome-mediated degradation of misfolded proteins in the endoplasmic reticulum that are retrotranslocated in the cytosol. Involved in ubiquitin-proteasome systems (By similarity).</text>
</comment>
<comment type="subcellular location">
    <subcellularLocation>
        <location evidence="1">Cytoplasm</location>
    </subcellularLocation>
</comment>
<sequence length="287" mass="32566">MAECSTLESLIEMGFSPSRAEKALAATGNQGIEPAMDWLVEHEDDPDIDEPSVVVPEDSDSGTTDTQGMDTCEERLPLTEEEKEKQTKRMMELIAQKQKEREEREKRERIEQEKQRRKQGQELSAVKQKIQEQEMQKAVEDRRREKQEEKLARDRVREKIARDKAERARRFGGAGSEPISPPAEASIPATTPSPSSPVQEPPTKKEYDQCRIQVRLLDGSALSQTFRAREQLAAVRLYVELNWPGGAPGPFNLLTSFPRRVFTEEDMEKPLQELGLVPSAVLIVARK</sequence>
<keyword id="KW-0175">Coiled coil</keyword>
<keyword id="KW-0963">Cytoplasm</keyword>
<keyword id="KW-1185">Reference proteome</keyword>
<organism>
    <name type="scientific">Xenopus tropicalis</name>
    <name type="common">Western clawed frog</name>
    <name type="synonym">Silurana tropicalis</name>
    <dbReference type="NCBI Taxonomy" id="8364"/>
    <lineage>
        <taxon>Eukaryota</taxon>
        <taxon>Metazoa</taxon>
        <taxon>Chordata</taxon>
        <taxon>Craniata</taxon>
        <taxon>Vertebrata</taxon>
        <taxon>Euteleostomi</taxon>
        <taxon>Amphibia</taxon>
        <taxon>Batrachia</taxon>
        <taxon>Anura</taxon>
        <taxon>Pipoidea</taxon>
        <taxon>Pipidae</taxon>
        <taxon>Xenopodinae</taxon>
        <taxon>Xenopus</taxon>
        <taxon>Silurana</taxon>
    </lineage>
</organism>
<accession>Q6GL77</accession>
<proteinExistence type="evidence at transcript level"/>
<name>UBXN1_XENTR</name>
<dbReference type="EMBL" id="BC074627">
    <property type="protein sequence ID" value="AAH74627.1"/>
    <property type="molecule type" value="mRNA"/>
</dbReference>
<dbReference type="EMBL" id="BC075456">
    <property type="protein sequence ID" value="AAH75456.1"/>
    <property type="molecule type" value="mRNA"/>
</dbReference>
<dbReference type="RefSeq" id="NP_001004957.1">
    <property type="nucleotide sequence ID" value="NM_001004957.1"/>
</dbReference>
<dbReference type="RefSeq" id="XP_012809780.1">
    <property type="nucleotide sequence ID" value="XM_012954326.3"/>
</dbReference>
<dbReference type="SMR" id="Q6GL77"/>
<dbReference type="FunCoup" id="Q6GL77">
    <property type="interactions" value="3627"/>
</dbReference>
<dbReference type="STRING" id="8364.ENSXETP00000023719"/>
<dbReference type="PaxDb" id="8364-ENSXETP00000012041"/>
<dbReference type="DNASU" id="448372"/>
<dbReference type="GeneID" id="448372"/>
<dbReference type="KEGG" id="xtr:448372"/>
<dbReference type="AGR" id="Xenbase:XB-GENE-979857"/>
<dbReference type="CTD" id="51035"/>
<dbReference type="Xenbase" id="XB-GENE-979857">
    <property type="gene designation" value="ubxn1"/>
</dbReference>
<dbReference type="eggNOG" id="KOG2689">
    <property type="taxonomic scope" value="Eukaryota"/>
</dbReference>
<dbReference type="HOGENOM" id="CLU_047594_1_0_1"/>
<dbReference type="InParanoid" id="Q6GL77"/>
<dbReference type="OMA" id="AQHFPRK"/>
<dbReference type="OrthoDB" id="10254930at2759"/>
<dbReference type="PhylomeDB" id="Q6GL77"/>
<dbReference type="TreeFam" id="TF313944"/>
<dbReference type="Reactome" id="R-XTR-532668">
    <property type="pathway name" value="N-glycan trimming in the ER and Calnexin/Calreticulin cycle"/>
</dbReference>
<dbReference type="Proteomes" id="UP000008143">
    <property type="component" value="Chromosome 4"/>
</dbReference>
<dbReference type="Bgee" id="ENSXETG00000005477">
    <property type="expression patterns" value="Expressed in heart and 14 other cell types or tissues"/>
</dbReference>
<dbReference type="GO" id="GO:0005737">
    <property type="term" value="C:cytoplasm"/>
    <property type="evidence" value="ECO:0007669"/>
    <property type="project" value="UniProtKB-SubCell"/>
</dbReference>
<dbReference type="CDD" id="cd14302">
    <property type="entry name" value="UBA_UBXN1"/>
    <property type="match status" value="1"/>
</dbReference>
<dbReference type="CDD" id="cd01772">
    <property type="entry name" value="UBX_UBXN1"/>
    <property type="match status" value="1"/>
</dbReference>
<dbReference type="FunFam" id="1.10.8.10:FF:000044">
    <property type="entry name" value="UBX domain-containing protein 1"/>
    <property type="match status" value="1"/>
</dbReference>
<dbReference type="FunFam" id="3.10.20.90:FF:000134">
    <property type="entry name" value="UBX domain-containing protein 1"/>
    <property type="match status" value="1"/>
</dbReference>
<dbReference type="Gene3D" id="1.10.8.10">
    <property type="entry name" value="DNA helicase RuvA subunit, C-terminal domain"/>
    <property type="match status" value="1"/>
</dbReference>
<dbReference type="Gene3D" id="3.10.20.90">
    <property type="entry name" value="Phosphatidylinositol 3-kinase Catalytic Subunit, Chain A, domain 1"/>
    <property type="match status" value="1"/>
</dbReference>
<dbReference type="InterPro" id="IPR015940">
    <property type="entry name" value="UBA"/>
</dbReference>
<dbReference type="InterPro" id="IPR009060">
    <property type="entry name" value="UBA-like_sf"/>
</dbReference>
<dbReference type="InterPro" id="IPR041923">
    <property type="entry name" value="UBA_UBXN1"/>
</dbReference>
<dbReference type="InterPro" id="IPR029071">
    <property type="entry name" value="Ubiquitin-like_domsf"/>
</dbReference>
<dbReference type="InterPro" id="IPR001012">
    <property type="entry name" value="UBX_dom"/>
</dbReference>
<dbReference type="PANTHER" id="PTHR46340">
    <property type="entry name" value="UBX DOMAIN-CONTAINING PROTEIN 1"/>
    <property type="match status" value="1"/>
</dbReference>
<dbReference type="PANTHER" id="PTHR46340:SF1">
    <property type="entry name" value="UBX DOMAIN-CONTAINING PROTEIN 1"/>
    <property type="match status" value="1"/>
</dbReference>
<dbReference type="Pfam" id="PF22562">
    <property type="entry name" value="UBA_7"/>
    <property type="match status" value="1"/>
</dbReference>
<dbReference type="Pfam" id="PF00789">
    <property type="entry name" value="UBX"/>
    <property type="match status" value="1"/>
</dbReference>
<dbReference type="SMART" id="SM00165">
    <property type="entry name" value="UBA"/>
    <property type="match status" value="1"/>
</dbReference>
<dbReference type="SMART" id="SM00166">
    <property type="entry name" value="UBX"/>
    <property type="match status" value="1"/>
</dbReference>
<dbReference type="SUPFAM" id="SSF46934">
    <property type="entry name" value="UBA-like"/>
    <property type="match status" value="1"/>
</dbReference>
<dbReference type="SUPFAM" id="SSF54236">
    <property type="entry name" value="Ubiquitin-like"/>
    <property type="match status" value="1"/>
</dbReference>
<dbReference type="PROSITE" id="PS50030">
    <property type="entry name" value="UBA"/>
    <property type="match status" value="1"/>
</dbReference>
<dbReference type="PROSITE" id="PS50033">
    <property type="entry name" value="UBX"/>
    <property type="match status" value="1"/>
</dbReference>